<keyword id="KW-0025">Alternative splicing</keyword>
<keyword id="KW-0050">Antiport</keyword>
<keyword id="KW-1003">Cell membrane</keyword>
<keyword id="KW-0966">Cell projection</keyword>
<keyword id="KW-0969">Cilium</keyword>
<keyword id="KW-0968">Cytoplasmic vesicle</keyword>
<keyword id="KW-0967">Endosome</keyword>
<keyword id="KW-0282">Flagellum</keyword>
<keyword id="KW-0375">Hydrogen ion transport</keyword>
<keyword id="KW-0406">Ion transport</keyword>
<keyword id="KW-0458">Lysosome</keyword>
<keyword id="KW-0472">Membrane</keyword>
<keyword id="KW-0479">Metal-binding</keyword>
<keyword id="KW-0496">Mitochondrion</keyword>
<keyword id="KW-0597">Phosphoprotein</keyword>
<keyword id="KW-1185">Reference proteome</keyword>
<keyword id="KW-0915">Sodium</keyword>
<keyword id="KW-0739">Sodium transport</keyword>
<keyword id="KW-0770">Synapse</keyword>
<keyword id="KW-0812">Transmembrane</keyword>
<keyword id="KW-1133">Transmembrane helix</keyword>
<keyword id="KW-0813">Transport</keyword>
<proteinExistence type="evidence at protein level"/>
<evidence type="ECO:0000250" key="1">
    <source>
        <dbReference type="UniProtKB" id="A0A6P3HVI0"/>
    </source>
</evidence>
<evidence type="ECO:0000250" key="2">
    <source>
        <dbReference type="UniProtKB" id="Q86UD5"/>
    </source>
</evidence>
<evidence type="ECO:0000255" key="3"/>
<evidence type="ECO:0000256" key="4">
    <source>
        <dbReference type="SAM" id="MobiDB-lite"/>
    </source>
</evidence>
<evidence type="ECO:0000269" key="5">
    <source>
    </source>
</evidence>
<evidence type="ECO:0000269" key="6">
    <source>
    </source>
</evidence>
<evidence type="ECO:0000269" key="7">
    <source>
    </source>
</evidence>
<evidence type="ECO:0000269" key="8">
    <source>
    </source>
</evidence>
<evidence type="ECO:0000269" key="9">
    <source>
    </source>
</evidence>
<evidence type="ECO:0000269" key="10">
    <source>
    </source>
</evidence>
<evidence type="ECO:0000269" key="11">
    <source>
    </source>
</evidence>
<evidence type="ECO:0000269" key="12">
    <source>
    </source>
</evidence>
<evidence type="ECO:0000269" key="13">
    <source>
    </source>
</evidence>
<evidence type="ECO:0000269" key="14">
    <source>
    </source>
</evidence>
<evidence type="ECO:0000303" key="15">
    <source>
    </source>
</evidence>
<evidence type="ECO:0000303" key="16">
    <source>
    </source>
</evidence>
<evidence type="ECO:0000303" key="17">
    <source>
    </source>
</evidence>
<evidence type="ECO:0000305" key="18"/>
<evidence type="ECO:0000312" key="19">
    <source>
        <dbReference type="MGI" id="MGI:2140077"/>
    </source>
</evidence>
<gene>
    <name evidence="19" type="primary">Slc9b2</name>
    <name type="synonym">Nha2</name>
    <name evidence="17" type="synonym">Nhe10</name>
    <name type="synonym">Nhedc2</name>
</gene>
<dbReference type="EMBL" id="AK029417">
    <property type="protein sequence ID" value="BAC26441.1"/>
    <property type="molecule type" value="mRNA"/>
</dbReference>
<dbReference type="EMBL" id="AK039655">
    <property type="protein sequence ID" value="BAC30408.1"/>
    <property type="molecule type" value="mRNA"/>
</dbReference>
<dbReference type="EMBL" id="AC104874">
    <property type="status" value="NOT_ANNOTATED_CDS"/>
    <property type="molecule type" value="Genomic_DNA"/>
</dbReference>
<dbReference type="EMBL" id="BC090977">
    <property type="protein sequence ID" value="AAH90977.1"/>
    <property type="molecule type" value="mRNA"/>
</dbReference>
<dbReference type="CCDS" id="CCDS17854.1">
    <molecule id="Q5BKR2-1"/>
</dbReference>
<dbReference type="RefSeq" id="NP_849208.4">
    <molecule id="Q5BKR2-1"/>
    <property type="nucleotide sequence ID" value="NM_178877.6"/>
</dbReference>
<dbReference type="RefSeq" id="XP_006502461.1">
    <molecule id="Q5BKR2-1"/>
    <property type="nucleotide sequence ID" value="XM_006502398.3"/>
</dbReference>
<dbReference type="RefSeq" id="XP_006502462.1">
    <molecule id="Q5BKR2-1"/>
    <property type="nucleotide sequence ID" value="XM_006502399.3"/>
</dbReference>
<dbReference type="SMR" id="Q5BKR2"/>
<dbReference type="FunCoup" id="Q5BKR2">
    <property type="interactions" value="19"/>
</dbReference>
<dbReference type="STRING" id="10090.ENSMUSP00000060640"/>
<dbReference type="PhosphoSitePlus" id="Q5BKR2"/>
<dbReference type="PaxDb" id="10090-ENSMUSP00000060640"/>
<dbReference type="PeptideAtlas" id="Q5BKR2"/>
<dbReference type="ProteomicsDB" id="261067">
    <molecule id="Q5BKR2-1"/>
</dbReference>
<dbReference type="ProteomicsDB" id="261068">
    <molecule id="Q5BKR2-2"/>
</dbReference>
<dbReference type="ProteomicsDB" id="261069">
    <molecule id="Q5BKR2-3"/>
</dbReference>
<dbReference type="Antibodypedia" id="26081">
    <property type="antibodies" value="157 antibodies from 23 providers"/>
</dbReference>
<dbReference type="DNASU" id="97086"/>
<dbReference type="Ensembl" id="ENSMUST00000051849.10">
    <molecule id="Q5BKR2-1"/>
    <property type="protein sequence ID" value="ENSMUSP00000060640.8"/>
    <property type="gene ID" value="ENSMUSG00000037994.15"/>
</dbReference>
<dbReference type="GeneID" id="97086"/>
<dbReference type="KEGG" id="mmu:97086"/>
<dbReference type="UCSC" id="uc008rld.2">
    <molecule id="Q5BKR2-1"/>
    <property type="organism name" value="mouse"/>
</dbReference>
<dbReference type="UCSC" id="uc008rle.2">
    <molecule id="Q5BKR2-3"/>
    <property type="organism name" value="mouse"/>
</dbReference>
<dbReference type="AGR" id="MGI:2140077"/>
<dbReference type="CTD" id="133308"/>
<dbReference type="MGI" id="MGI:2140077">
    <property type="gene designation" value="Slc9b2"/>
</dbReference>
<dbReference type="VEuPathDB" id="HostDB:ENSMUSG00000037994"/>
<dbReference type="eggNOG" id="KOG3826">
    <property type="taxonomic scope" value="Eukaryota"/>
</dbReference>
<dbReference type="GeneTree" id="ENSGT00390000013285"/>
<dbReference type="HOGENOM" id="CLU_018415_4_1_1"/>
<dbReference type="InParanoid" id="Q5BKR2"/>
<dbReference type="OMA" id="WAIPTFA"/>
<dbReference type="OrthoDB" id="423807at2759"/>
<dbReference type="PhylomeDB" id="Q5BKR2"/>
<dbReference type="TreeFam" id="TF319087"/>
<dbReference type="Reactome" id="R-MMU-2672351">
    <property type="pathway name" value="Stimuli-sensing channels"/>
</dbReference>
<dbReference type="BioGRID-ORCS" id="97086">
    <property type="hits" value="3 hits in 77 CRISPR screens"/>
</dbReference>
<dbReference type="ChiTaRS" id="Slc9b2">
    <property type="organism name" value="mouse"/>
</dbReference>
<dbReference type="PRO" id="PR:Q5BKR2"/>
<dbReference type="Proteomes" id="UP000000589">
    <property type="component" value="Chromosome 3"/>
</dbReference>
<dbReference type="RNAct" id="Q5BKR2">
    <property type="molecule type" value="protein"/>
</dbReference>
<dbReference type="Bgee" id="ENSMUSG00000037994">
    <property type="expression patterns" value="Expressed in hindlimb long bone and 100 other cell types or tissues"/>
</dbReference>
<dbReference type="ExpressionAtlas" id="Q5BKR2">
    <property type="expression patterns" value="baseline and differential"/>
</dbReference>
<dbReference type="GO" id="GO:0016324">
    <property type="term" value="C:apical plasma membrane"/>
    <property type="evidence" value="ECO:0000314"/>
    <property type="project" value="UniProtKB"/>
</dbReference>
<dbReference type="GO" id="GO:0016323">
    <property type="term" value="C:basolateral plasma membrane"/>
    <property type="evidence" value="ECO:0000314"/>
    <property type="project" value="UniProtKB"/>
</dbReference>
<dbReference type="GO" id="GO:0010008">
    <property type="term" value="C:endosome membrane"/>
    <property type="evidence" value="ECO:0000314"/>
    <property type="project" value="UniProtKB"/>
</dbReference>
<dbReference type="GO" id="GO:0005765">
    <property type="term" value="C:lysosomal membrane"/>
    <property type="evidence" value="ECO:0007669"/>
    <property type="project" value="UniProtKB-SubCell"/>
</dbReference>
<dbReference type="GO" id="GO:0031966">
    <property type="term" value="C:mitochondrial membrane"/>
    <property type="evidence" value="ECO:0000250"/>
    <property type="project" value="UniProtKB"/>
</dbReference>
<dbReference type="GO" id="GO:0005886">
    <property type="term" value="C:plasma membrane"/>
    <property type="evidence" value="ECO:0000314"/>
    <property type="project" value="UniProtKB"/>
</dbReference>
<dbReference type="GO" id="GO:0055037">
    <property type="term" value="C:recycling endosome"/>
    <property type="evidence" value="ECO:0000314"/>
    <property type="project" value="UniProtKB"/>
</dbReference>
<dbReference type="GO" id="GO:0055038">
    <property type="term" value="C:recycling endosome membrane"/>
    <property type="evidence" value="ECO:0007669"/>
    <property type="project" value="UniProtKB-SubCell"/>
</dbReference>
<dbReference type="GO" id="GO:0097228">
    <property type="term" value="C:sperm principal piece"/>
    <property type="evidence" value="ECO:0000315"/>
    <property type="project" value="UniProtKB"/>
</dbReference>
<dbReference type="GO" id="GO:0030672">
    <property type="term" value="C:synaptic vesicle membrane"/>
    <property type="evidence" value="ECO:0000314"/>
    <property type="project" value="UniProtKB"/>
</dbReference>
<dbReference type="GO" id="GO:0042802">
    <property type="term" value="F:identical protein binding"/>
    <property type="evidence" value="ECO:0007669"/>
    <property type="project" value="Ensembl"/>
</dbReference>
<dbReference type="GO" id="GO:0010348">
    <property type="term" value="F:lithium:proton antiporter activity"/>
    <property type="evidence" value="ECO:0000250"/>
    <property type="project" value="UniProtKB"/>
</dbReference>
<dbReference type="GO" id="GO:0046872">
    <property type="term" value="F:metal ion binding"/>
    <property type="evidence" value="ECO:0007669"/>
    <property type="project" value="UniProtKB-KW"/>
</dbReference>
<dbReference type="GO" id="GO:0015385">
    <property type="term" value="F:sodium:proton antiporter activity"/>
    <property type="evidence" value="ECO:0000250"/>
    <property type="project" value="UniProtKB"/>
</dbReference>
<dbReference type="GO" id="GO:0072583">
    <property type="term" value="P:clathrin-dependent endocytosis"/>
    <property type="evidence" value="ECO:0000314"/>
    <property type="project" value="UniProtKB"/>
</dbReference>
<dbReference type="GO" id="GO:0030317">
    <property type="term" value="P:flagellated sperm motility"/>
    <property type="evidence" value="ECO:0000315"/>
    <property type="project" value="UniProtKB"/>
</dbReference>
<dbReference type="GO" id="GO:0010351">
    <property type="term" value="P:lithium ion transport"/>
    <property type="evidence" value="ECO:0007669"/>
    <property type="project" value="Ensembl"/>
</dbReference>
<dbReference type="GO" id="GO:2001206">
    <property type="term" value="P:positive regulation of osteoclast development"/>
    <property type="evidence" value="ECO:0000314"/>
    <property type="project" value="MGI"/>
</dbReference>
<dbReference type="GO" id="GO:0061178">
    <property type="term" value="P:regulation of insulin secretion involved in cellular response to glucose stimulus"/>
    <property type="evidence" value="ECO:0000314"/>
    <property type="project" value="UniProtKB"/>
</dbReference>
<dbReference type="GO" id="GO:0055078">
    <property type="term" value="P:sodium ion homeostasis"/>
    <property type="evidence" value="ECO:0000314"/>
    <property type="project" value="UniProtKB"/>
</dbReference>
<dbReference type="FunFam" id="1.20.1530.20:FF:000012">
    <property type="entry name" value="sodium/hydrogen exchanger 9B2 isoform X1"/>
    <property type="match status" value="1"/>
</dbReference>
<dbReference type="Gene3D" id="1.20.1530.20">
    <property type="match status" value="1"/>
</dbReference>
<dbReference type="InterPro" id="IPR006153">
    <property type="entry name" value="Cation/H_exchanger_TM"/>
</dbReference>
<dbReference type="InterPro" id="IPR051843">
    <property type="entry name" value="CPA1_transporter"/>
</dbReference>
<dbReference type="InterPro" id="IPR038770">
    <property type="entry name" value="Na+/solute_symporter_sf"/>
</dbReference>
<dbReference type="PANTHER" id="PTHR31102">
    <property type="match status" value="1"/>
</dbReference>
<dbReference type="PANTHER" id="PTHR31102:SF14">
    <property type="entry name" value="SODIUM_HYDROGEN EXCHANGER 9B2"/>
    <property type="match status" value="1"/>
</dbReference>
<dbReference type="Pfam" id="PF00999">
    <property type="entry name" value="Na_H_Exchanger"/>
    <property type="match status" value="1"/>
</dbReference>
<accession>Q5BKR2</accession>
<accession>Q8CA47</accession>
<accession>Q8CDX4</accession>
<reference key="1">
    <citation type="journal article" date="2005" name="Science">
        <title>The transcriptional landscape of the mammalian genome.</title>
        <authorList>
            <person name="Carninci P."/>
            <person name="Kasukawa T."/>
            <person name="Katayama S."/>
            <person name="Gough J."/>
            <person name="Frith M.C."/>
            <person name="Maeda N."/>
            <person name="Oyama R."/>
            <person name="Ravasi T."/>
            <person name="Lenhard B."/>
            <person name="Wells C."/>
            <person name="Kodzius R."/>
            <person name="Shimokawa K."/>
            <person name="Bajic V.B."/>
            <person name="Brenner S.E."/>
            <person name="Batalov S."/>
            <person name="Forrest A.R."/>
            <person name="Zavolan M."/>
            <person name="Davis M.J."/>
            <person name="Wilming L.G."/>
            <person name="Aidinis V."/>
            <person name="Allen J.E."/>
            <person name="Ambesi-Impiombato A."/>
            <person name="Apweiler R."/>
            <person name="Aturaliya R.N."/>
            <person name="Bailey T.L."/>
            <person name="Bansal M."/>
            <person name="Baxter L."/>
            <person name="Beisel K.W."/>
            <person name="Bersano T."/>
            <person name="Bono H."/>
            <person name="Chalk A.M."/>
            <person name="Chiu K.P."/>
            <person name="Choudhary V."/>
            <person name="Christoffels A."/>
            <person name="Clutterbuck D.R."/>
            <person name="Crowe M.L."/>
            <person name="Dalla E."/>
            <person name="Dalrymple B.P."/>
            <person name="de Bono B."/>
            <person name="Della Gatta G."/>
            <person name="di Bernardo D."/>
            <person name="Down T."/>
            <person name="Engstrom P."/>
            <person name="Fagiolini M."/>
            <person name="Faulkner G."/>
            <person name="Fletcher C.F."/>
            <person name="Fukushima T."/>
            <person name="Furuno M."/>
            <person name="Futaki S."/>
            <person name="Gariboldi M."/>
            <person name="Georgii-Hemming P."/>
            <person name="Gingeras T.R."/>
            <person name="Gojobori T."/>
            <person name="Green R.E."/>
            <person name="Gustincich S."/>
            <person name="Harbers M."/>
            <person name="Hayashi Y."/>
            <person name="Hensch T.K."/>
            <person name="Hirokawa N."/>
            <person name="Hill D."/>
            <person name="Huminiecki L."/>
            <person name="Iacono M."/>
            <person name="Ikeo K."/>
            <person name="Iwama A."/>
            <person name="Ishikawa T."/>
            <person name="Jakt M."/>
            <person name="Kanapin A."/>
            <person name="Katoh M."/>
            <person name="Kawasawa Y."/>
            <person name="Kelso J."/>
            <person name="Kitamura H."/>
            <person name="Kitano H."/>
            <person name="Kollias G."/>
            <person name="Krishnan S.P."/>
            <person name="Kruger A."/>
            <person name="Kummerfeld S.K."/>
            <person name="Kurochkin I.V."/>
            <person name="Lareau L.F."/>
            <person name="Lazarevic D."/>
            <person name="Lipovich L."/>
            <person name="Liu J."/>
            <person name="Liuni S."/>
            <person name="McWilliam S."/>
            <person name="Madan Babu M."/>
            <person name="Madera M."/>
            <person name="Marchionni L."/>
            <person name="Matsuda H."/>
            <person name="Matsuzawa S."/>
            <person name="Miki H."/>
            <person name="Mignone F."/>
            <person name="Miyake S."/>
            <person name="Morris K."/>
            <person name="Mottagui-Tabar S."/>
            <person name="Mulder N."/>
            <person name="Nakano N."/>
            <person name="Nakauchi H."/>
            <person name="Ng P."/>
            <person name="Nilsson R."/>
            <person name="Nishiguchi S."/>
            <person name="Nishikawa S."/>
            <person name="Nori F."/>
            <person name="Ohara O."/>
            <person name="Okazaki Y."/>
            <person name="Orlando V."/>
            <person name="Pang K.C."/>
            <person name="Pavan W.J."/>
            <person name="Pavesi G."/>
            <person name="Pesole G."/>
            <person name="Petrovsky N."/>
            <person name="Piazza S."/>
            <person name="Reed J."/>
            <person name="Reid J.F."/>
            <person name="Ring B.Z."/>
            <person name="Ringwald M."/>
            <person name="Rost B."/>
            <person name="Ruan Y."/>
            <person name="Salzberg S.L."/>
            <person name="Sandelin A."/>
            <person name="Schneider C."/>
            <person name="Schoenbach C."/>
            <person name="Sekiguchi K."/>
            <person name="Semple C.A."/>
            <person name="Seno S."/>
            <person name="Sessa L."/>
            <person name="Sheng Y."/>
            <person name="Shibata Y."/>
            <person name="Shimada H."/>
            <person name="Shimada K."/>
            <person name="Silva D."/>
            <person name="Sinclair B."/>
            <person name="Sperling S."/>
            <person name="Stupka E."/>
            <person name="Sugiura K."/>
            <person name="Sultana R."/>
            <person name="Takenaka Y."/>
            <person name="Taki K."/>
            <person name="Tammoja K."/>
            <person name="Tan S.L."/>
            <person name="Tang S."/>
            <person name="Taylor M.S."/>
            <person name="Tegner J."/>
            <person name="Teichmann S.A."/>
            <person name="Ueda H.R."/>
            <person name="van Nimwegen E."/>
            <person name="Verardo R."/>
            <person name="Wei C.L."/>
            <person name="Yagi K."/>
            <person name="Yamanishi H."/>
            <person name="Zabarovsky E."/>
            <person name="Zhu S."/>
            <person name="Zimmer A."/>
            <person name="Hide W."/>
            <person name="Bult C."/>
            <person name="Grimmond S.M."/>
            <person name="Teasdale R.D."/>
            <person name="Liu E.T."/>
            <person name="Brusic V."/>
            <person name="Quackenbush J."/>
            <person name="Wahlestedt C."/>
            <person name="Mattick J.S."/>
            <person name="Hume D.A."/>
            <person name="Kai C."/>
            <person name="Sasaki D."/>
            <person name="Tomaru Y."/>
            <person name="Fukuda S."/>
            <person name="Kanamori-Katayama M."/>
            <person name="Suzuki M."/>
            <person name="Aoki J."/>
            <person name="Arakawa T."/>
            <person name="Iida J."/>
            <person name="Imamura K."/>
            <person name="Itoh M."/>
            <person name="Kato T."/>
            <person name="Kawaji H."/>
            <person name="Kawagashira N."/>
            <person name="Kawashima T."/>
            <person name="Kojima M."/>
            <person name="Kondo S."/>
            <person name="Konno H."/>
            <person name="Nakano K."/>
            <person name="Ninomiya N."/>
            <person name="Nishio T."/>
            <person name="Okada M."/>
            <person name="Plessy C."/>
            <person name="Shibata K."/>
            <person name="Shiraki T."/>
            <person name="Suzuki S."/>
            <person name="Tagami M."/>
            <person name="Waki K."/>
            <person name="Watahiki A."/>
            <person name="Okamura-Oho Y."/>
            <person name="Suzuki H."/>
            <person name="Kawai J."/>
            <person name="Hayashizaki Y."/>
        </authorList>
    </citation>
    <scope>NUCLEOTIDE SEQUENCE [LARGE SCALE MRNA] (ISOFORMS 2 AND 3)</scope>
    <source>
        <strain>C57BL/6J</strain>
        <tissue>Head</tissue>
        <tissue>Spinal cord</tissue>
    </source>
</reference>
<reference key="2">
    <citation type="journal article" date="2009" name="PLoS Biol.">
        <title>Lineage-specific biology revealed by a finished genome assembly of the mouse.</title>
        <authorList>
            <person name="Church D.M."/>
            <person name="Goodstadt L."/>
            <person name="Hillier L.W."/>
            <person name="Zody M.C."/>
            <person name="Goldstein S."/>
            <person name="She X."/>
            <person name="Bult C.J."/>
            <person name="Agarwala R."/>
            <person name="Cherry J.L."/>
            <person name="DiCuccio M."/>
            <person name="Hlavina W."/>
            <person name="Kapustin Y."/>
            <person name="Meric P."/>
            <person name="Maglott D."/>
            <person name="Birtle Z."/>
            <person name="Marques A.C."/>
            <person name="Graves T."/>
            <person name="Zhou S."/>
            <person name="Teague B."/>
            <person name="Potamousis K."/>
            <person name="Churas C."/>
            <person name="Place M."/>
            <person name="Herschleb J."/>
            <person name="Runnheim R."/>
            <person name="Forrest D."/>
            <person name="Amos-Landgraf J."/>
            <person name="Schwartz D.C."/>
            <person name="Cheng Z."/>
            <person name="Lindblad-Toh K."/>
            <person name="Eichler E.E."/>
            <person name="Ponting C.P."/>
        </authorList>
    </citation>
    <scope>NUCLEOTIDE SEQUENCE [LARGE SCALE GENOMIC DNA]</scope>
    <source>
        <strain>C57BL/6J</strain>
    </source>
</reference>
<reference key="3">
    <citation type="journal article" date="2004" name="Genome Res.">
        <title>The status, quality, and expansion of the NIH full-length cDNA project: the Mammalian Gene Collection (MGC).</title>
        <authorList>
            <consortium name="The MGC Project Team"/>
        </authorList>
    </citation>
    <scope>NUCLEOTIDE SEQUENCE [LARGE SCALE MRNA] (ISOFORM 1)</scope>
    <source>
        <tissue>Molar</tissue>
    </source>
</reference>
<reference key="4">
    <citation type="journal article" date="2007" name="Gene Expr. Patterns">
        <title>Expression analysis of nha-oc/NHA2: a novel gene selectively expressed in osteoclasts.</title>
        <authorList>
            <person name="Pham L."/>
            <person name="Purcell P."/>
            <person name="Morse L."/>
            <person name="Stashenko P."/>
            <person name="Battaglino R.A."/>
        </authorList>
    </citation>
    <scope>TISSUE SPECIFICITY</scope>
    <scope>INDUCTION</scope>
</reference>
<reference key="5">
    <citation type="journal article" date="2007" name="Proc. Natl. Acad. Sci. U.S.A.">
        <title>A human Na+/H+ antiporter sharing evolutionary origins with bacterial NhaA may be a candidate gene for essential hypertension.</title>
        <authorList>
            <person name="Xiang M."/>
            <person name="Feng M."/>
            <person name="Muend S."/>
            <person name="Rao R."/>
        </authorList>
    </citation>
    <scope>TISSUE SPECIFICITY</scope>
</reference>
<reference key="6">
    <citation type="journal article" date="2008" name="Bone">
        <title>NHA-oc/NHA2: a mitochondrial cation-proton antiporter selectively expressed in osteoclasts.</title>
        <authorList>
            <person name="Battaglino R.A."/>
            <person name="Pham L."/>
            <person name="Morse L.R."/>
            <person name="Vokes M."/>
            <person name="Sharma A."/>
            <person name="Odgren P.R."/>
            <person name="Yang M."/>
            <person name="Sasaki H."/>
            <person name="Stashenko P."/>
        </authorList>
    </citation>
    <scope>FUNCTION</scope>
    <scope>CATALYTIC ACTIVITY</scope>
    <scope>SUBCELLULAR LOCATION</scope>
    <scope>INDUCTION</scope>
    <scope>TISSUE SPECIFICITY</scope>
</reference>
<reference key="7">
    <citation type="journal article" date="2008" name="Biochem. Biophys. Res. Commun.">
        <title>NHE10, an osteoclast-specific member of the Na+/H+ exchanger family, regulates osteoclast differentiation and survival [corrected].</title>
        <authorList>
            <person name="Lee S.H."/>
            <person name="Kim T."/>
            <person name="Park E.S."/>
            <person name="Yang S."/>
            <person name="Jeong D."/>
            <person name="Choi Y."/>
            <person name="Rho J."/>
        </authorList>
    </citation>
    <scope>NUCLEOTIDE SEQUENCE [MRNA]</scope>
    <scope>TISSUE SPECIFICITY</scope>
</reference>
<reference key="8">
    <citation type="journal article" date="2008" name="J. Am. Soc. Nephrol.">
        <title>Characterization of the sodium/hydrogen exchanger NHA2.</title>
        <authorList>
            <person name="Fuster D.G."/>
            <person name="Zhang J."/>
            <person name="Shi M."/>
            <person name="Bobulescu I.A."/>
            <person name="Andersson S."/>
            <person name="Moe O.W."/>
        </authorList>
    </citation>
    <scope>TISSUE SPECIFICITY</scope>
    <scope>SUBCELLULAR LOCATION</scope>
    <scope>FUNCTION</scope>
    <scope>CATALYTIC ACTIVITY</scope>
    <scope>INDUCTION</scope>
</reference>
<reference key="9">
    <citation type="journal article" date="2010" name="Bone">
        <title>Sodium/hydrogen exchanger NHA2 in osteoclasts: subcellular localization and role in vitro and in vivo.</title>
        <authorList>
            <person name="Hofstetter W."/>
            <person name="Siegrist M."/>
            <person name="Simonin A."/>
            <person name="Bonny O."/>
            <person name="Fuster D.G."/>
        </authorList>
    </citation>
    <scope>SUBCELLULAR LOCATION</scope>
    <scope>DISRUPTION PHENOTYPE</scope>
    <scope>INDUCTION</scope>
    <scope>FUNCTION</scope>
</reference>
<reference key="10">
    <citation type="journal article" date="2012" name="Bone">
        <title>The collection of NFATc1-dependent transcripts in the osteoclast includes numerous genes non-essential to physiologic bone resorption.</title>
        <authorList>
            <person name="Charles J.F."/>
            <person name="Coury F."/>
            <person name="Sulyanto R."/>
            <person name="Sitara D."/>
            <person name="Wu J."/>
            <person name="Brady N."/>
            <person name="Tsang K."/>
            <person name="Sigrist K."/>
            <person name="Tollefsen D.M."/>
            <person name="He L."/>
            <person name="Storm D."/>
            <person name="Aliprantis A.O."/>
        </authorList>
    </citation>
    <scope>DISRUPTION PHENOTYPE</scope>
    <scope>FUNCTION</scope>
</reference>
<reference key="11">
    <citation type="journal article" date="2013" name="Proc. Natl. Acad. Sci. U.S.A.">
        <title>Sodium/hydrogen exchanger NHA2 is critical for insulin secretion in beta-cells.</title>
        <authorList>
            <person name="Deisl C."/>
            <person name="Simonin A."/>
            <person name="Anderegg M."/>
            <person name="Albano G."/>
            <person name="Kovacs G."/>
            <person name="Ackermann D."/>
            <person name="Moch H."/>
            <person name="Dolci W."/>
            <person name="Thorens B."/>
            <person name="Hediger M.A."/>
            <person name="Fuster D.G."/>
        </authorList>
    </citation>
    <scope>SUBCELLULAR LOCATION</scope>
    <scope>TISSUE SPECIFICITY</scope>
    <scope>FUNCTION</scope>
    <scope>DISRUPTION PHENOTYPE</scope>
</reference>
<reference key="12">
    <citation type="journal article" date="2016" name="Cell Death Dis.">
        <title>Sodium-hydrogen exchanger NHA1 and NHA2 control sperm motility and male fertility.</title>
        <authorList>
            <person name="Chen S.R."/>
            <person name="Chen M."/>
            <person name="Deng S.L."/>
            <person name="Hao X.X."/>
            <person name="Wang X.X."/>
            <person name="Liu Y.X."/>
        </authorList>
    </citation>
    <scope>SUBCELLULAR LOCATION</scope>
    <scope>DISRUPTION PHENOTYPE</scope>
    <scope>FUNCTION</scope>
    <scope>TISSUE SPECIFICITY</scope>
</reference>
<reference key="13">
    <citation type="journal article" date="2017" name="J. Physiol. Biochem.">
        <title>NHA2 is expressed in distal nephron and regulated by dietary sodium.</title>
        <authorList>
            <person name="Kondapalli K.C."/>
            <person name="Todd Alexander R."/>
            <person name="Pluznick J.L."/>
            <person name="Rao R."/>
        </authorList>
    </citation>
    <scope>SUBCELLULAR LOCATION</scope>
    <scope>FUNCTION</scope>
</reference>
<reference key="14">
    <citation type="journal article" date="2021" name="Kidney Int.">
        <title>The sodium/proton exchanger NHA2 regulates blood pressure through a WNK4-NCC dependent pathway in the kidney.</title>
        <authorList>
            <person name="Anderegg M.A."/>
            <person name="Albano G."/>
            <person name="Hanke D."/>
            <person name="Deisl C."/>
            <person name="Uehlinger D.E."/>
            <person name="Brandt S."/>
            <person name="Bhardwaj R."/>
            <person name="Hediger M.A."/>
            <person name="Fuster D.G."/>
        </authorList>
    </citation>
    <scope>SUBCELLULAR LOCATION</scope>
    <scope>FUNCTION</scope>
    <scope>TISSUE SPECIFICITY</scope>
</reference>
<comment type="function">
    <text evidence="2 6 8 9 11 12 13 14">Electroneutral Na(+) Li(+)/H(+) antiporter that extrudes Na(+) or Li(+) in exchange for external protons across the membrane (PubMed:17988971, PubMed:18508966). Uses the proton gradient/membrane potential to extrude sodium (By similarity). Contributes to the regulation of intracellular pH and sodium homeostasis (PubMed:27909897). Also able to mediate Na(+)/Li(+) antiporter activity in kidney (By similarity). May play a physiological role in renal tubular function and blood pressure homeostasis (PubMed:27909897, PubMed:32956652). Plays an important role for insulin secretion and clathrin-mediated endocytosis in beta-cells (PubMed:23720317). Involved in sperm motility and fertility (PubMed:27010853). It is controversial whether SLC9B2 plays a role in osteoclast differentiation or not (PubMed:17988971, PubMed:20441802).</text>
</comment>
<comment type="catalytic activity">
    <reaction evidence="6 8">
        <text>Na(+)(in) + H(+)(out) = Na(+)(out) + H(+)(in)</text>
        <dbReference type="Rhea" id="RHEA:29419"/>
        <dbReference type="ChEBI" id="CHEBI:15378"/>
        <dbReference type="ChEBI" id="CHEBI:29101"/>
    </reaction>
</comment>
<comment type="catalytic activity">
    <reaction evidence="2">
        <text>Li(+)(out) + H(+)(in) = Li(+)(in) + H(+)(out)</text>
        <dbReference type="Rhea" id="RHEA:72407"/>
        <dbReference type="ChEBI" id="CHEBI:15378"/>
        <dbReference type="ChEBI" id="CHEBI:49713"/>
    </reaction>
</comment>
<comment type="catalytic activity">
    <reaction evidence="2">
        <text>Li(+)(in) + Na(+)(out) = Li(+)(out) + Na(+)(in)</text>
        <dbReference type="Rhea" id="RHEA:72415"/>
        <dbReference type="ChEBI" id="CHEBI:29101"/>
        <dbReference type="ChEBI" id="CHEBI:49713"/>
    </reaction>
</comment>
<comment type="activity regulation">
    <text evidence="2">Allosterically inhibited by the N-terminal domain. Inhibited by phloretin.</text>
</comment>
<comment type="subunit">
    <text evidence="1">Homodimer; dimerization is essential for SLC9B2 activity. Lipids seem to play a role in the stabilization of the dimerization subdomain.</text>
</comment>
<comment type="subcellular location">
    <subcellularLocation>
        <location evidence="8 9">Cell membrane</location>
        <topology evidence="1">Multi-pass membrane protein</topology>
    </subcellularLocation>
    <subcellularLocation>
        <location evidence="6">Mitochondrion membrane</location>
        <topology evidence="1">Multi-pass membrane protein</topology>
    </subcellularLocation>
    <subcellularLocation>
        <location evidence="11">Endosome membrane</location>
        <topology evidence="1">Multi-pass membrane protein</topology>
    </subcellularLocation>
    <subcellularLocation>
        <location evidence="9">Lysosome membrane</location>
        <topology evidence="1">Multi-pass membrane protein</topology>
    </subcellularLocation>
    <subcellularLocation>
        <location evidence="14">Recycling endosome membrane</location>
        <topology evidence="1">Multi-pass membrane protein</topology>
    </subcellularLocation>
    <subcellularLocation>
        <location evidence="11">Cytoplasmic vesicle</location>
        <location evidence="11">Secretory vesicle</location>
        <location evidence="11">Synaptic vesicle membrane</location>
        <topology evidence="1">Multi-pass membrane protein</topology>
    </subcellularLocation>
    <subcellularLocation>
        <location evidence="12">Cell projection</location>
        <location evidence="12">Cilium</location>
        <location evidence="12">Flagellum membrane</location>
        <topology evidence="1">Multi-pass membrane protein</topology>
    </subcellularLocation>
    <subcellularLocation>
        <location evidence="9">Basolateral cell membrane</location>
        <topology evidence="1">Multi-pass membrane protein</topology>
    </subcellularLocation>
    <subcellularLocation>
        <location evidence="13">Apical cell membrane</location>
        <topology evidence="1">Multi-pass membrane protein</topology>
    </subcellularLocation>
    <text evidence="6 9 11">Strong colocalization with LAMP1 and TCIRG1 in osteoclasts (PubMed:20441802). In beta-cells colocalizes with RAB4A and SYP (PubMed:23720317). Localizes to the basolateral membrane of polarized osteoclasts (PubMed:20441802). Localizes to the apical membrane of distal convoluted and connecting tubules (PubMed:27909897).</text>
</comment>
<comment type="alternative products">
    <event type="alternative splicing"/>
    <isoform>
        <id>Q5BKR2-1</id>
        <name>1</name>
        <sequence type="displayed"/>
    </isoform>
    <isoform>
        <id>Q5BKR2-2</id>
        <name>2</name>
        <sequence type="described" ref="VSP_033155"/>
    </isoform>
    <isoform>
        <id>Q5BKR2-3</id>
        <name>3</name>
        <sequence type="described" ref="VSP_033154"/>
    </isoform>
</comment>
<comment type="tissue specificity">
    <text evidence="5 6 7 8 11 12 14">Widely expressed (PubMed:17988971, PubMed:18000046, PubMed:18508966). However expression seems to be restricted to specific cell types within individual organs, e.g. osteoclasts in the bone, distal tubules of the kidney or beta-cells of Langerhans islets (PubMed:17698421, PubMed:17988971, PubMed:18269914, PubMed:18508966, PubMed:23720317, PubMed:32956652). In sperm specifically present in the principal piece of sperm tail (at protein level) (PubMed:27010853).</text>
</comment>
<comment type="induction">
    <text evidence="5 6 8 9">Not detectable during the early stages of osteoclast differentiation induced by TNFSF11/RANKL (PubMed:17698421, PubMed:17988971). Up-regulated during the later stages of osteoclast differentiation (PubMed:17698421, PubMed:17988971, PubMed:18508966, PubMed:20441802). Up-regulated in macrophages and blood mononuclear cells treated with TNFSF11/RANKL.</text>
</comment>
<comment type="disruption phenotype">
    <text evidence="9 10 11 12">No visible phenotype. However males show reduced fertility caused by diminished sperm motility (PubMed:27010853). Deficient mice display a pathological glucose tolerance with impaired insulin secretion but normal peripheral insulin sensitivity (PubMed:23720317). Mutant have normal bone density and their bones are characterized by normal structural parameters (PubMed:20441802, PubMed:22985540).</text>
</comment>
<comment type="miscellaneous">
    <text evidence="6 9 14">The subcellular localization of NHA2 remains controversial. Was initially thought to partially localize to mitochondria (PubMed:17988971). It was later established that its predominant localization is in endosomes and lysosomes (PubMed:20441802). In another recent study, endogenous SLC9B2 in the distal tubular cell line mpkDCT4 is detected in recycling endosomes but absent in plasma membrane (PubMed:32956652).</text>
</comment>
<comment type="miscellaneous">
    <text evidence="2">Inhibited by phloretin but not by the classical SLC9A-inhibitor amiloride.</text>
</comment>
<comment type="similarity">
    <text evidence="18">Belongs to the monovalent cation:proton antiporter 1 (CPA1) transporter (TC 2.A.36) family.</text>
</comment>
<feature type="chain" id="PRO_0000331271" description="Sodium/hydrogen exchanger 9B2">
    <location>
        <begin position="1"/>
        <end position="547"/>
    </location>
</feature>
<feature type="topological domain" description="Cytoplasmic" evidence="18">
    <location>
        <begin position="1"/>
        <end position="86"/>
    </location>
</feature>
<feature type="transmembrane region" description="Helical; Name=1" evidence="1 3">
    <location>
        <begin position="87"/>
        <end position="104"/>
    </location>
</feature>
<feature type="topological domain" description="Extracellular" evidence="18">
    <location>
        <begin position="105"/>
        <end position="113"/>
    </location>
</feature>
<feature type="transmembrane region" description="Helical; Name=2" evidence="1 3">
    <location>
        <begin position="114"/>
        <end position="133"/>
    </location>
</feature>
<feature type="topological domain" description="Cytoplasmic" evidence="18">
    <location>
        <begin position="134"/>
        <end position="144"/>
    </location>
</feature>
<feature type="transmembrane region" description="Helical; Name=3" evidence="1 3">
    <location>
        <begin position="145"/>
        <end position="161"/>
    </location>
</feature>
<feature type="topological domain" description="Extracellular" evidence="18">
    <location>
        <begin position="162"/>
        <end position="171"/>
    </location>
</feature>
<feature type="transmembrane region" description="Helical; Name=4" evidence="1 3">
    <location>
        <begin position="172"/>
        <end position="189"/>
    </location>
</feature>
<feature type="topological domain" description="Cytoplasmic" evidence="18">
    <location>
        <begin position="190"/>
        <end position="200"/>
    </location>
</feature>
<feature type="transmembrane region" description="Helical; Name=5" evidence="1">
    <location>
        <begin position="201"/>
        <end position="227"/>
    </location>
</feature>
<feature type="topological domain" description="Extracellular" evidence="18">
    <location>
        <begin position="228"/>
        <end position="233"/>
    </location>
</feature>
<feature type="transmembrane region" description="Helical; Name=6" evidence="1">
    <location>
        <begin position="234"/>
        <end position="242"/>
    </location>
</feature>
<feature type="topological domain" description="Cytoplasmic" evidence="18">
    <location>
        <begin position="243"/>
        <end position="270"/>
    </location>
</feature>
<feature type="transmembrane region" description="Helical; Name=7" evidence="1">
    <location>
        <begin position="271"/>
        <end position="290"/>
    </location>
</feature>
<feature type="topological domain" description="Extracellular" evidence="18">
    <location>
        <begin position="291"/>
        <end position="300"/>
    </location>
</feature>
<feature type="transmembrane region" description="Helical; Name=8" evidence="1">
    <location>
        <begin position="301"/>
        <end position="324"/>
    </location>
</feature>
<feature type="topological domain" description="Cytoplasmic" evidence="18">
    <location>
        <begin position="325"/>
        <end position="339"/>
    </location>
</feature>
<feature type="transmembrane region" description="Helical; Name=9" evidence="1">
    <location>
        <begin position="340"/>
        <end position="357"/>
    </location>
</feature>
<feature type="topological domain" description="Extracellular" evidence="18">
    <location>
        <begin position="358"/>
        <end position="361"/>
    </location>
</feature>
<feature type="transmembrane region" description="Helical; Name=10" evidence="1">
    <location>
        <begin position="362"/>
        <end position="373"/>
    </location>
</feature>
<feature type="topological domain" description="Cytoplasmic" evidence="18">
    <location>
        <begin position="374"/>
        <end position="390"/>
    </location>
</feature>
<feature type="transmembrane region" description="Helical; Name=11" evidence="1">
    <location>
        <begin position="391"/>
        <end position="411"/>
    </location>
</feature>
<feature type="topological domain" description="Extracellular" evidence="18">
    <location>
        <begin position="412"/>
        <end position="417"/>
    </location>
</feature>
<feature type="transmembrane region" description="Helical; Name=12" evidence="1">
    <location>
        <begin position="418"/>
        <end position="440"/>
    </location>
</feature>
<feature type="topological domain" description="Cytoplasmic" evidence="18">
    <location>
        <begin position="441"/>
        <end position="461"/>
    </location>
</feature>
<feature type="transmembrane region" description="Helical; Name=13" evidence="1">
    <location>
        <begin position="462"/>
        <end position="473"/>
    </location>
</feature>
<feature type="topological domain" description="Extracellular" evidence="18">
    <location>
        <begin position="474"/>
        <end position="486"/>
    </location>
</feature>
<feature type="transmembrane region" description="Helical; Name=14" evidence="1">
    <location>
        <begin position="487"/>
        <end position="509"/>
    </location>
</feature>
<feature type="topological domain" description="Cytoplasmic" evidence="18">
    <location>
        <begin position="510"/>
        <end position="547"/>
    </location>
</feature>
<feature type="region of interest" description="Disordered" evidence="4">
    <location>
        <begin position="1"/>
        <end position="68"/>
    </location>
</feature>
<feature type="region of interest" description="Disordered" evidence="4">
    <location>
        <begin position="522"/>
        <end position="547"/>
    </location>
</feature>
<feature type="compositionally biased region" description="Basic and acidic residues" evidence="4">
    <location>
        <begin position="23"/>
        <end position="45"/>
    </location>
</feature>
<feature type="compositionally biased region" description="Basic and acidic residues" evidence="4">
    <location>
        <begin position="538"/>
        <end position="547"/>
    </location>
</feature>
<feature type="binding site" evidence="2">
    <location>
        <position position="244"/>
    </location>
    <ligand>
        <name>Na(+)</name>
        <dbReference type="ChEBI" id="CHEBI:29101"/>
    </ligand>
</feature>
<feature type="binding site" evidence="2">
    <location>
        <position position="275"/>
    </location>
    <ligand>
        <name>Na(+)</name>
        <dbReference type="ChEBI" id="CHEBI:29101"/>
    </ligand>
</feature>
<feature type="binding site" evidence="2">
    <location>
        <position position="278"/>
    </location>
    <ligand>
        <name>Na(+)</name>
        <dbReference type="ChEBI" id="CHEBI:29101"/>
    </ligand>
</feature>
<feature type="binding site" evidence="2">
    <location>
        <position position="279"/>
    </location>
    <ligand>
        <name>Na(+)</name>
        <dbReference type="ChEBI" id="CHEBI:29101"/>
    </ligand>
</feature>
<feature type="modified residue" description="Phosphoserine" evidence="2">
    <location>
        <position position="49"/>
    </location>
</feature>
<feature type="splice variant" id="VSP_033154" description="In isoform 3." evidence="15">
    <location>
        <begin position="1"/>
        <end position="438"/>
    </location>
</feature>
<feature type="splice variant" id="VSP_033155" description="In isoform 2." evidence="15">
    <location>
        <begin position="1"/>
        <end position="252"/>
    </location>
</feature>
<feature type="sequence conflict" description="In Ref. 3; AAH90977." evidence="18" ref="3">
    <original>Q</original>
    <variation>R</variation>
    <location>
        <position position="30"/>
    </location>
</feature>
<name>SL9B2_MOUSE</name>
<protein>
    <recommendedName>
        <fullName>Sodium/hydrogen exchanger 9B2</fullName>
    </recommendedName>
    <alternativeName>
        <fullName evidence="16">NHA-oc</fullName>
    </alternativeName>
    <alternativeName>
        <fullName>Na(+)/H(+) exchanger NHA2</fullName>
    </alternativeName>
    <alternativeName>
        <fullName>Na(+)/H(+) exchanger-like domain-containing protein 2</fullName>
        <shortName>NHE domain-containing protein 2</shortName>
    </alternativeName>
    <alternativeName>
        <fullName>Soditlum/hydrogen exchanger-like domain-containing protein 2</fullName>
    </alternativeName>
    <alternativeName>
        <fullName>Solute carrier family 9 subfamily B member 2</fullName>
    </alternativeName>
</protein>
<sequence>MEDEDKTAECQHSKPPTGITHEAPPHHELQEERVMSLRGTDRSEPTEGSNLLTSGEKKPQDSPTEPNGLQSLRRFLACPPRGCLARVITNGTMVVLLWAMVWSVTGPECLPGGNLFGIIILFYCSITGGKLFGLIKFPTLPPLPPLLGMLLAGFLLRNIPVINDSVRIQHKWSSSLRSIALSVILVRAGLGLDSKALRKLKGVCVRLAMGPCIVEACASAILSHFLMGLPWQWGFILGFVVGAVSPAVVVPSMLLLQEGGYGVGKGIPTLLMAAGSFDDILAITGFNTCLGVAFSTGSTVFNIFRGILEVVIGVAAGSFLGFFIQYFPSRDQDNLVWKRAFLVLGFAVLAVFSSVYFSFPGSGGLCTLVMAFLAGMRWTDKKSEVEKVIAVTWDVFQPLLFGLIGAEVSIVSLRAETVGLCVATLSIAVLIRILTTFLMVCFAGFNIKEKIFISFAWLPKATVQAAIGSVALDTARSHGEKQLEDYGMDVLTVAFLAILITAPIGSLLIGLLGPRVLQKSEHRTEEEVQGETSAHIQRKPEDSITEA</sequence>
<organism>
    <name type="scientific">Mus musculus</name>
    <name type="common">Mouse</name>
    <dbReference type="NCBI Taxonomy" id="10090"/>
    <lineage>
        <taxon>Eukaryota</taxon>
        <taxon>Metazoa</taxon>
        <taxon>Chordata</taxon>
        <taxon>Craniata</taxon>
        <taxon>Vertebrata</taxon>
        <taxon>Euteleostomi</taxon>
        <taxon>Mammalia</taxon>
        <taxon>Eutheria</taxon>
        <taxon>Euarchontoglires</taxon>
        <taxon>Glires</taxon>
        <taxon>Rodentia</taxon>
        <taxon>Myomorpha</taxon>
        <taxon>Muroidea</taxon>
        <taxon>Muridae</taxon>
        <taxon>Murinae</taxon>
        <taxon>Mus</taxon>
        <taxon>Mus</taxon>
    </lineage>
</organism>